<protein>
    <recommendedName>
        <fullName evidence="10 12">Monomethylxanthine methyltransferase 2</fullName>
        <shortName evidence="10 12">CaMXMT2</shortName>
        <ecNumber evidence="5 6">2.1.1.159</ecNumber>
    </recommendedName>
    <alternativeName>
        <fullName evidence="10 12">7-methylxanthine N-methyltransferase 2</fullName>
    </alternativeName>
    <alternativeName>
        <fullName evidence="9">Theobromine synthase 2</fullName>
    </alternativeName>
    <alternativeName>
        <fullName>Theobromine synthase 3</fullName>
    </alternativeName>
</protein>
<sequence>MELQEVLHMNEGEGDTSYAKNASYNLALAKVKPFLEQCIRELLRANLPNINKCIKVADLGCASGPNTLLTVRDIVQSIDKVGQEEKNELERPTIQIFLNDLFQNDFNSVFKLLPSFYRKLEKENGRKIGSCLISAMPGSFYGRLFPEESMHFLHSCYSVHWLSQVPSGLVIELGIGANKGSIYSSKASRPPVQKAYLDQFTKDFTTFLRIHSKELFSRGRMLLTCICKVDEYDEPNPLDLLDMAINDLIVEGHLEEEKLASFNLPFFTPSAEEVKCIVEEEGSFEILYLETFKAHYDAGFSIDDDYPVRSHFQVYGDEHIKAEYVASLIRSVYEPILASHFGEAIMPDLFHRLAKHAAKVLHLGKGCYNNLIISLAKKPEKSDV</sequence>
<evidence type="ECO:0000250" key="1">
    <source>
        <dbReference type="UniProtKB" id="A4GE69"/>
    </source>
</evidence>
<evidence type="ECO:0000250" key="2">
    <source>
        <dbReference type="UniProtKB" id="A4GE70"/>
    </source>
</evidence>
<evidence type="ECO:0000250" key="3">
    <source>
        <dbReference type="UniProtKB" id="Q9FLN8"/>
    </source>
</evidence>
<evidence type="ECO:0000250" key="4">
    <source>
        <dbReference type="UniProtKB" id="Q9FZN8"/>
    </source>
</evidence>
<evidence type="ECO:0000269" key="5">
    <source>
    </source>
</evidence>
<evidence type="ECO:0000269" key="6">
    <source>
    </source>
</evidence>
<evidence type="ECO:0000269" key="7">
    <source>
    </source>
</evidence>
<evidence type="ECO:0000269" key="8">
    <source>
    </source>
</evidence>
<evidence type="ECO:0000303" key="9">
    <source>
    </source>
</evidence>
<evidence type="ECO:0000303" key="10">
    <source>
    </source>
</evidence>
<evidence type="ECO:0000303" key="11">
    <source>
    </source>
</evidence>
<evidence type="ECO:0000303" key="12">
    <source>
    </source>
</evidence>
<evidence type="ECO:0000305" key="13"/>
<dbReference type="EC" id="2.1.1.159" evidence="5 6"/>
<dbReference type="EMBL" id="AB054841">
    <property type="protein sequence ID" value="BAC43757.1"/>
    <property type="molecule type" value="mRNA"/>
</dbReference>
<dbReference type="EMBL" id="AB084126">
    <property type="protein sequence ID" value="BAC75664.1"/>
    <property type="molecule type" value="mRNA"/>
</dbReference>
<dbReference type="EMBL" id="JX978512">
    <property type="protein sequence ID" value="AFV60440.1"/>
    <property type="molecule type" value="Genomic_DNA"/>
</dbReference>
<dbReference type="EMBL" id="JX978520">
    <property type="protein sequence ID" value="AFV60448.1"/>
    <property type="molecule type" value="mRNA"/>
</dbReference>
<dbReference type="SMR" id="Q84PP7"/>
<dbReference type="KEGG" id="ag:BAC75664"/>
<dbReference type="BRENDA" id="2.1.1.159">
    <property type="organism ID" value="1559"/>
</dbReference>
<dbReference type="SABIO-RK" id="Q84PP7"/>
<dbReference type="Proteomes" id="UP000515148">
    <property type="component" value="Unplaced"/>
</dbReference>
<dbReference type="GO" id="GO:0102741">
    <property type="term" value="F:caffeine synthase activity"/>
    <property type="evidence" value="ECO:0007669"/>
    <property type="project" value="RHEA"/>
</dbReference>
<dbReference type="GO" id="GO:0046872">
    <property type="term" value="F:metal ion binding"/>
    <property type="evidence" value="ECO:0007669"/>
    <property type="project" value="UniProtKB-KW"/>
</dbReference>
<dbReference type="GO" id="GO:0009820">
    <property type="term" value="P:alkaloid metabolic process"/>
    <property type="evidence" value="ECO:0007669"/>
    <property type="project" value="UniProtKB-KW"/>
</dbReference>
<dbReference type="GO" id="GO:0032259">
    <property type="term" value="P:methylation"/>
    <property type="evidence" value="ECO:0007669"/>
    <property type="project" value="UniProtKB-KW"/>
</dbReference>
<dbReference type="Gene3D" id="1.10.1200.270">
    <property type="entry name" value="Methyltransferase, alpha-helical capping domain"/>
    <property type="match status" value="1"/>
</dbReference>
<dbReference type="Gene3D" id="3.40.50.150">
    <property type="entry name" value="Vaccinia Virus protein VP39"/>
    <property type="match status" value="1"/>
</dbReference>
<dbReference type="InterPro" id="IPR005299">
    <property type="entry name" value="MeTrfase_7"/>
</dbReference>
<dbReference type="InterPro" id="IPR042086">
    <property type="entry name" value="MeTrfase_capping"/>
</dbReference>
<dbReference type="InterPro" id="IPR029063">
    <property type="entry name" value="SAM-dependent_MTases_sf"/>
</dbReference>
<dbReference type="PANTHER" id="PTHR31009">
    <property type="entry name" value="S-ADENOSYL-L-METHIONINE:CARBOXYL METHYLTRANSFERASE FAMILY PROTEIN"/>
    <property type="match status" value="1"/>
</dbReference>
<dbReference type="Pfam" id="PF03492">
    <property type="entry name" value="Methyltransf_7"/>
    <property type="match status" value="1"/>
</dbReference>
<dbReference type="SUPFAM" id="SSF53335">
    <property type="entry name" value="S-adenosyl-L-methionine-dependent methyltransferases"/>
    <property type="match status" value="1"/>
</dbReference>
<proteinExistence type="evidence at protein level"/>
<keyword id="KW-0017">Alkaloid metabolism</keyword>
<keyword id="KW-0460">Magnesium</keyword>
<keyword id="KW-0479">Metal-binding</keyword>
<keyword id="KW-0489">Methyltransferase</keyword>
<keyword id="KW-1185">Reference proteome</keyword>
<keyword id="KW-0949">S-adenosyl-L-methionine</keyword>
<keyword id="KW-0808">Transferase</keyword>
<gene>
    <name evidence="10 12" type="primary">MXMT2</name>
    <name evidence="9" type="synonym">CTS2</name>
</gene>
<name>MXMT2_COFAR</name>
<reference key="1">
    <citation type="journal article" date="2003" name="FEBS Lett.">
        <title>Isolation of a new dual-functional caffeine synthase gene encoding an enzyme for the conversion of 7-methylxanthine to caffeine from coffee (Coffea arabica L.).</title>
        <authorList>
            <person name="Mizuno K."/>
            <person name="Okuda A."/>
            <person name="Kato M."/>
            <person name="Yoneyama N."/>
            <person name="Tanaka H."/>
            <person name="Ashihara H."/>
            <person name="Fujimura T."/>
        </authorList>
    </citation>
    <scope>NUCLEOTIDE SEQUENCE [MRNA]</scope>
    <scope>FUNCTION</scope>
    <scope>CATALYTIC ACTIVITY</scope>
    <scope>BIOPHYSICOCHEMICAL PROPERTIES</scope>
    <scope>TISSUE SPECIFICITY</scope>
    <scope>PATHWAY</scope>
</reference>
<reference key="2">
    <citation type="journal article" date="2003" name="Plant Physiol.">
        <title>Molecular cloning and functional characterization of three distinct N-methyltransferases involved in the caffeine biosynthetic pathway in coffee plants.</title>
        <authorList>
            <person name="Uefuji H."/>
            <person name="Ogita S."/>
            <person name="Yamaguchi Y."/>
            <person name="Koizumi N."/>
            <person name="Sano H."/>
        </authorList>
    </citation>
    <scope>NUCLEOTIDE SEQUENCE [MRNA]</scope>
    <scope>FUNCTION</scope>
    <scope>CATALYTIC ACTIVITY</scope>
    <scope>BIOPHYSICOCHEMICAL PROPERTIES</scope>
    <scope>TISSUE SPECIFICITY</scope>
    <scope>PATHWAY</scope>
    <source>
        <tissue>Fruit</tissue>
    </source>
</reference>
<reference key="3">
    <citation type="journal article" date="2015" name="Planta">
        <title>Differential regulation of caffeine metabolism in Coffea arabica (Arabica) and Coffea canephora (Robusta).</title>
        <authorList>
            <person name="Perrois C."/>
            <person name="Strickler S.R."/>
            <person name="Mathieu G."/>
            <person name="Lepelley M."/>
            <person name="Bedon L."/>
            <person name="Michaux S."/>
            <person name="Husson J."/>
            <person name="Mueller L."/>
            <person name="Privat I."/>
        </authorList>
    </citation>
    <scope>NUCLEOTIDE SEQUENCE [GENOMIC DNA / MRNA]</scope>
    <scope>TISSUE SPECIFICITY</scope>
    <scope>GENE FAMILY</scope>
    <scope>NOMENCLATURE</scope>
    <source>
        <strain>cv. Caturra</strain>
        <strain>cv. ET39</strain>
    </source>
</reference>
<reference key="4">
    <citation type="journal article" date="2003" name="FEBS Lett.">
        <title>The first committed step reaction of caffeine biosynthesis: 7-methylxanthosine synthase is closely homologous to caffeine synthases in coffee (Coffea arabica L.).</title>
        <authorList>
            <person name="Mizuno K."/>
            <person name="Kato M."/>
            <person name="Irino F."/>
            <person name="Yoneyama N."/>
            <person name="Fujimura T."/>
            <person name="Ashihara H."/>
        </authorList>
    </citation>
    <scope>BIOPHYSICOCHEMICAL PROPERTIES</scope>
</reference>
<reference key="5">
    <citation type="journal article" date="2008" name="Phytochemistry">
        <title>Caffeine and related purine alkaloids: biosynthesis, catabolism, function and genetic engineering.</title>
        <authorList>
            <person name="Ashihara H."/>
            <person name="Sano H."/>
            <person name="Crozier A."/>
        </authorList>
    </citation>
    <scope>FUNCTION</scope>
    <scope>REVIEW ON CAFFEINE BIOSYNTHESIS</scope>
</reference>
<feature type="chain" id="PRO_0000408305" description="Monomethylxanthine methyltransferase 2">
    <location>
        <begin position="1"/>
        <end position="384"/>
    </location>
</feature>
<feature type="binding site" evidence="2">
    <location>
        <position position="18"/>
    </location>
    <ligand>
        <name>S-adenosyl-L-homocysteine</name>
        <dbReference type="ChEBI" id="CHEBI:57856"/>
    </ligand>
</feature>
<feature type="binding site" evidence="2">
    <location>
        <position position="61"/>
    </location>
    <ligand>
        <name>S-adenosyl-L-homocysteine</name>
        <dbReference type="ChEBI" id="CHEBI:57856"/>
    </ligand>
</feature>
<feature type="binding site" evidence="2">
    <location>
        <position position="66"/>
    </location>
    <ligand>
        <name>S-adenosyl-L-homocysteine</name>
        <dbReference type="ChEBI" id="CHEBI:57856"/>
    </ligand>
</feature>
<feature type="binding site" evidence="2">
    <location>
        <position position="100"/>
    </location>
    <ligand>
        <name>S-adenosyl-L-homocysteine</name>
        <dbReference type="ChEBI" id="CHEBI:57856"/>
    </ligand>
</feature>
<feature type="binding site" evidence="2">
    <location>
        <position position="101"/>
    </location>
    <ligand>
        <name>S-adenosyl-L-homocysteine</name>
        <dbReference type="ChEBI" id="CHEBI:57856"/>
    </ligand>
</feature>
<feature type="binding site" evidence="2">
    <location>
        <position position="139"/>
    </location>
    <ligand>
        <name>S-adenosyl-L-homocysteine</name>
        <dbReference type="ChEBI" id="CHEBI:57856"/>
    </ligand>
</feature>
<feature type="binding site" evidence="2">
    <location>
        <position position="140"/>
    </location>
    <ligand>
        <name>S-adenosyl-L-homocysteine</name>
        <dbReference type="ChEBI" id="CHEBI:57856"/>
    </ligand>
</feature>
<feature type="binding site" evidence="1">
    <location>
        <position position="156"/>
    </location>
    <ligand>
        <name>S-adenosyl-L-homocysteine</name>
        <dbReference type="ChEBI" id="CHEBI:57856"/>
    </ligand>
</feature>
<feature type="binding site" evidence="2">
    <location>
        <position position="157"/>
    </location>
    <ligand>
        <name>theobromine</name>
        <dbReference type="ChEBI" id="CHEBI:28946"/>
    </ligand>
</feature>
<feature type="binding site" evidence="2">
    <location>
        <position position="160"/>
    </location>
    <ligand>
        <name>theobromine</name>
        <dbReference type="ChEBI" id="CHEBI:28946"/>
    </ligand>
</feature>
<feature type="binding site" evidence="2">
    <location>
        <position position="161"/>
    </location>
    <ligand>
        <name>theobromine</name>
        <dbReference type="ChEBI" id="CHEBI:28946"/>
    </ligand>
</feature>
<feature type="binding site" evidence="3">
    <location>
        <position position="178"/>
    </location>
    <ligand>
        <name>Mg(2+)</name>
        <dbReference type="ChEBI" id="CHEBI:18420"/>
    </ligand>
</feature>
<feature type="binding site" evidence="3">
    <location>
        <position position="262"/>
    </location>
    <ligand>
        <name>Mg(2+)</name>
        <dbReference type="ChEBI" id="CHEBI:18420"/>
    </ligand>
</feature>
<feature type="binding site" evidence="3">
    <location>
        <position position="263"/>
    </location>
    <ligand>
        <name>Mg(2+)</name>
        <dbReference type="ChEBI" id="CHEBI:18420"/>
    </ligand>
</feature>
<feature type="binding site" evidence="2">
    <location>
        <position position="368"/>
    </location>
    <ligand>
        <name>theobromine</name>
        <dbReference type="ChEBI" id="CHEBI:28946"/>
    </ligand>
</feature>
<feature type="site" description="Involved in substrate discrimination" evidence="4">
    <location>
        <position position="154"/>
    </location>
</feature>
<feature type="site" description="Involved in substrate discrimination" evidence="4">
    <location>
        <position position="266"/>
    </location>
</feature>
<feature type="site" description="Involved in substrate discrimination" evidence="4">
    <location>
        <position position="343"/>
    </location>
</feature>
<feature type="sequence conflict" description="In Ref. 1; BAC43757." evidence="13" ref="1">
    <original>E</original>
    <variation>A</variation>
    <location>
        <position position="5"/>
    </location>
</feature>
<feature type="sequence conflict" description="In Ref. 3; AFV60440/AFV60448 and 1; BAC43757." evidence="13" ref="3 1">
    <original>E</original>
    <variation>G</variation>
    <location>
        <position position="11"/>
    </location>
</feature>
<feature type="sequence conflict" description="In Ref. 3; AFV60440/AFV60448 and 1; BAC43757." evidence="13" ref="3 1">
    <original>A</original>
    <variation>S</variation>
    <location>
        <position position="22"/>
    </location>
</feature>
<feature type="sequence conflict" description="In Ref. 3; AFV60440/AFV60448 and 1; BAC43757." evidence="13" ref="3 1">
    <original>F</original>
    <variation>V</variation>
    <location>
        <position position="34"/>
    </location>
</feature>
<feature type="sequence conflict" description="In Ref. 3; AFV60440/AFV60448 and 1; BAC43757." evidence="13" ref="3 1">
    <original>K</original>
    <variation>N</variation>
    <location>
        <position position="52"/>
    </location>
</feature>
<feature type="sequence conflict" description="In Ref. 3; AFV60440/AFV60448 and 1; BAC43757." evidence="13" ref="3 1">
    <original>L</original>
    <variation>I</variation>
    <location>
        <position position="153"/>
    </location>
</feature>
<feature type="sequence conflict" description="In Ref. 3; AFV60440/AFV60448 and 1; BAC43757." evidence="13" ref="3 1">
    <original>V</original>
    <variation>F</variation>
    <location>
        <position position="159"/>
    </location>
</feature>
<feature type="sequence conflict" description="In Ref. 3; AFV60440/AFV60448 and 1; BAC43757." evidence="13" ref="3 1">
    <original>G</original>
    <variation>S</variation>
    <location>
        <position position="176"/>
    </location>
</feature>
<feature type="sequence conflict" description="In Ref. 1; BAC43757." evidence="13" ref="1">
    <original>V</original>
    <variation>M</variation>
    <location>
        <position position="384"/>
    </location>
</feature>
<comment type="function">
    <text evidence="5 6 11">Involved in the biosynthesis of caffeine. Catalyzes the conversion of 7-methylxanthine (7mX) to theobromine and with a lower activity of paraxanthine to caffeine (PubMed:12527364, PubMed:12746542, PubMed:18068204). Does not have 1-N-methylation activity (PubMed:12527364).</text>
</comment>
<comment type="catalytic activity">
    <reaction evidence="5 6">
        <text>7-methylxanthine + S-adenosyl-L-methionine = theobromine + S-adenosyl-L-homocysteine + H(+)</text>
        <dbReference type="Rhea" id="RHEA:24604"/>
        <dbReference type="ChEBI" id="CHEBI:15378"/>
        <dbReference type="ChEBI" id="CHEBI:28946"/>
        <dbReference type="ChEBI" id="CHEBI:48991"/>
        <dbReference type="ChEBI" id="CHEBI:57856"/>
        <dbReference type="ChEBI" id="CHEBI:59789"/>
        <dbReference type="EC" id="2.1.1.159"/>
    </reaction>
    <physiologicalReaction direction="left-to-right" evidence="5 6">
        <dbReference type="Rhea" id="RHEA:24605"/>
    </physiologicalReaction>
</comment>
<comment type="cofactor">
    <cofactor evidence="3">
        <name>Mg(2+)</name>
        <dbReference type="ChEBI" id="CHEBI:18420"/>
    </cofactor>
    <text evidence="3">Binds 1 Mg(2+) ion per subunit.</text>
</comment>
<comment type="biophysicochemical properties">
    <kinetics>
        <KM evidence="5 7">171 uM for 7-methylxanthine</KM>
        <KM evidence="6">251 uM for 7-methylxanthine</KM>
        <KM evidence="6">738 uM for paraxanthine</KM>
        <KM evidence="6">14 uM for S-adenosyl-L-methionine</KM>
    </kinetics>
    <phDependence>
        <text evidence="5 7">Optimum pH is 8.</text>
    </phDependence>
</comment>
<comment type="pathway">
    <text evidence="5 6">Alkaloid biosynthesis.</text>
</comment>
<comment type="tissue specificity">
    <text evidence="5 6 8">Expressed, at low levels, in young leaves, floral buds and immature fruits (grains), but not in old leaves and mature fruits (PubMed:12746542, PubMed:25249475). Highly expressed in developing endosperm and flower buds (PubMed:12527364). Detected in young leaves (PubMed:12527364, PubMed:25249475).</text>
</comment>
<comment type="similarity">
    <text evidence="13">Belongs to the methyltransferase superfamily. Type-7 methyltransferase family.</text>
</comment>
<accession>Q84PP7</accession>
<accession>A0A096VHZ2</accession>
<accession>Q8H0G0</accession>
<organism>
    <name type="scientific">Coffea arabica</name>
    <name type="common">Arabian coffee</name>
    <dbReference type="NCBI Taxonomy" id="13443"/>
    <lineage>
        <taxon>Eukaryota</taxon>
        <taxon>Viridiplantae</taxon>
        <taxon>Streptophyta</taxon>
        <taxon>Embryophyta</taxon>
        <taxon>Tracheophyta</taxon>
        <taxon>Spermatophyta</taxon>
        <taxon>Magnoliopsida</taxon>
        <taxon>eudicotyledons</taxon>
        <taxon>Gunneridae</taxon>
        <taxon>Pentapetalae</taxon>
        <taxon>asterids</taxon>
        <taxon>lamiids</taxon>
        <taxon>Gentianales</taxon>
        <taxon>Rubiaceae</taxon>
        <taxon>Ixoroideae</taxon>
        <taxon>Gardenieae complex</taxon>
        <taxon>Bertiereae - Coffeeae clade</taxon>
        <taxon>Coffeeae</taxon>
        <taxon>Coffea</taxon>
    </lineage>
</organism>